<proteinExistence type="inferred from homology"/>
<feature type="chain" id="PRO_1000211871" description="Nitrogenase iron protein">
    <location>
        <begin position="1"/>
        <end position="289"/>
    </location>
</feature>
<feature type="binding site" evidence="1">
    <location>
        <begin position="8"/>
        <end position="15"/>
    </location>
    <ligand>
        <name>ATP</name>
        <dbReference type="ChEBI" id="CHEBI:30616"/>
    </ligand>
</feature>
<feature type="binding site" evidence="1">
    <location>
        <position position="96"/>
    </location>
    <ligand>
        <name>[4Fe-4S] cluster</name>
        <dbReference type="ChEBI" id="CHEBI:49883"/>
        <note>ligand shared between dimeric partners</note>
    </ligand>
</feature>
<feature type="binding site" evidence="1">
    <location>
        <position position="130"/>
    </location>
    <ligand>
        <name>[4Fe-4S] cluster</name>
        <dbReference type="ChEBI" id="CHEBI:49883"/>
        <note>ligand shared between dimeric partners</note>
    </ligand>
</feature>
<feature type="modified residue" description="ADP-ribosylarginine; by dinitrogenase reductase ADP-ribosyltransferase" evidence="1">
    <location>
        <position position="99"/>
    </location>
</feature>
<reference key="1">
    <citation type="journal article" date="2007" name="Genome Res.">
        <title>Genome characteristics of facultatively symbiotic Frankia sp. strains reflect host range and host plant biogeography.</title>
        <authorList>
            <person name="Normand P."/>
            <person name="Lapierre P."/>
            <person name="Tisa L.S."/>
            <person name="Gogarten J.P."/>
            <person name="Alloisio N."/>
            <person name="Bagnarol E."/>
            <person name="Bassi C.A."/>
            <person name="Berry A.M."/>
            <person name="Bickhart D.M."/>
            <person name="Choisne N."/>
            <person name="Couloux A."/>
            <person name="Cournoyer B."/>
            <person name="Cruveiller S."/>
            <person name="Daubin V."/>
            <person name="Demange N."/>
            <person name="Francino M.P."/>
            <person name="Goltsman E."/>
            <person name="Huang Y."/>
            <person name="Kopp O.R."/>
            <person name="Labarre L."/>
            <person name="Lapidus A."/>
            <person name="Lavire C."/>
            <person name="Marechal J."/>
            <person name="Martinez M."/>
            <person name="Mastronunzio J.E."/>
            <person name="Mullin B.C."/>
            <person name="Niemann J."/>
            <person name="Pujic P."/>
            <person name="Rawnsley T."/>
            <person name="Rouy Z."/>
            <person name="Schenowitz C."/>
            <person name="Sellstedt A."/>
            <person name="Tavares F."/>
            <person name="Tomkins J.P."/>
            <person name="Vallenet D."/>
            <person name="Valverde C."/>
            <person name="Wall L.G."/>
            <person name="Wang Y."/>
            <person name="Medigue C."/>
            <person name="Benson D.R."/>
        </authorList>
    </citation>
    <scope>NUCLEOTIDE SEQUENCE [LARGE SCALE GENOMIC DNA]</scope>
    <source>
        <strain>EAN1pec</strain>
    </source>
</reference>
<accession>A8L2C4</accession>
<dbReference type="EC" id="1.18.6.1" evidence="1"/>
<dbReference type="EMBL" id="CP000820">
    <property type="protein sequence ID" value="ABW16215.1"/>
    <property type="molecule type" value="Genomic_DNA"/>
</dbReference>
<dbReference type="RefSeq" id="WP_020464282.1">
    <property type="nucleotide sequence ID" value="NC_009921.1"/>
</dbReference>
<dbReference type="SMR" id="A8L2C4"/>
<dbReference type="STRING" id="298653.Franean1_6881"/>
<dbReference type="KEGG" id="fre:Franean1_6881"/>
<dbReference type="eggNOG" id="COG1348">
    <property type="taxonomic scope" value="Bacteria"/>
</dbReference>
<dbReference type="HOGENOM" id="CLU_059373_0_0_11"/>
<dbReference type="GO" id="GO:0051539">
    <property type="term" value="F:4 iron, 4 sulfur cluster binding"/>
    <property type="evidence" value="ECO:0007669"/>
    <property type="project" value="UniProtKB-KW"/>
</dbReference>
<dbReference type="GO" id="GO:0005524">
    <property type="term" value="F:ATP binding"/>
    <property type="evidence" value="ECO:0007669"/>
    <property type="project" value="UniProtKB-UniRule"/>
</dbReference>
<dbReference type="GO" id="GO:0046872">
    <property type="term" value="F:metal ion binding"/>
    <property type="evidence" value="ECO:0007669"/>
    <property type="project" value="UniProtKB-KW"/>
</dbReference>
<dbReference type="GO" id="GO:0016163">
    <property type="term" value="F:nitrogenase activity"/>
    <property type="evidence" value="ECO:0007669"/>
    <property type="project" value="UniProtKB-UniRule"/>
</dbReference>
<dbReference type="GO" id="GO:0009399">
    <property type="term" value="P:nitrogen fixation"/>
    <property type="evidence" value="ECO:0007669"/>
    <property type="project" value="UniProtKB-UniRule"/>
</dbReference>
<dbReference type="CDD" id="cd02040">
    <property type="entry name" value="NifH"/>
    <property type="match status" value="1"/>
</dbReference>
<dbReference type="FunFam" id="3.40.50.300:FF:001379">
    <property type="entry name" value="Nitrogenase iron protein 1"/>
    <property type="match status" value="1"/>
</dbReference>
<dbReference type="Gene3D" id="3.40.50.300">
    <property type="entry name" value="P-loop containing nucleotide triphosphate hydrolases"/>
    <property type="match status" value="1"/>
</dbReference>
<dbReference type="HAMAP" id="MF_00533">
    <property type="entry name" value="NifH"/>
    <property type="match status" value="1"/>
</dbReference>
<dbReference type="InterPro" id="IPR030655">
    <property type="entry name" value="NifH/chlL_CS"/>
</dbReference>
<dbReference type="InterPro" id="IPR000392">
    <property type="entry name" value="NifH/frxC"/>
</dbReference>
<dbReference type="InterPro" id="IPR005977">
    <property type="entry name" value="Nitrogenase_Fe_NifH"/>
</dbReference>
<dbReference type="InterPro" id="IPR027417">
    <property type="entry name" value="P-loop_NTPase"/>
</dbReference>
<dbReference type="NCBIfam" id="TIGR01287">
    <property type="entry name" value="nifH"/>
    <property type="match status" value="1"/>
</dbReference>
<dbReference type="PANTHER" id="PTHR42864">
    <property type="entry name" value="LIGHT-INDEPENDENT PROTOCHLOROPHYLLIDE REDUCTASE IRON-SULFUR ATP-BINDING PROTEIN"/>
    <property type="match status" value="1"/>
</dbReference>
<dbReference type="PANTHER" id="PTHR42864:SF2">
    <property type="entry name" value="LIGHT-INDEPENDENT PROTOCHLOROPHYLLIDE REDUCTASE IRON-SULFUR ATP-BINDING PROTEIN"/>
    <property type="match status" value="1"/>
</dbReference>
<dbReference type="Pfam" id="PF00142">
    <property type="entry name" value="Fer4_NifH"/>
    <property type="match status" value="1"/>
</dbReference>
<dbReference type="PIRSF" id="PIRSF000363">
    <property type="entry name" value="Nitrogenase_iron"/>
    <property type="match status" value="1"/>
</dbReference>
<dbReference type="PRINTS" id="PR00091">
    <property type="entry name" value="NITROGNASEII"/>
</dbReference>
<dbReference type="SUPFAM" id="SSF52540">
    <property type="entry name" value="P-loop containing nucleoside triphosphate hydrolases"/>
    <property type="match status" value="1"/>
</dbReference>
<dbReference type="PROSITE" id="PS00746">
    <property type="entry name" value="NIFH_FRXC_1"/>
    <property type="match status" value="1"/>
</dbReference>
<dbReference type="PROSITE" id="PS00692">
    <property type="entry name" value="NIFH_FRXC_2"/>
    <property type="match status" value="1"/>
</dbReference>
<dbReference type="PROSITE" id="PS51026">
    <property type="entry name" value="NIFH_FRXC_3"/>
    <property type="match status" value="1"/>
</dbReference>
<keyword id="KW-0004">4Fe-4S</keyword>
<keyword id="KW-0013">ADP-ribosylation</keyword>
<keyword id="KW-0067">ATP-binding</keyword>
<keyword id="KW-0408">Iron</keyword>
<keyword id="KW-0411">Iron-sulfur</keyword>
<keyword id="KW-0479">Metal-binding</keyword>
<keyword id="KW-0535">Nitrogen fixation</keyword>
<keyword id="KW-0547">Nucleotide-binding</keyword>
<keyword id="KW-0560">Oxidoreductase</keyword>
<comment type="function">
    <text evidence="1">The key enzymatic reactions in nitrogen fixation are catalyzed by the nitrogenase complex, which has 2 components: the iron protein and the molybdenum-iron protein.</text>
</comment>
<comment type="catalytic activity">
    <reaction evidence="1">
        <text>N2 + 8 reduced [2Fe-2S]-[ferredoxin] + 16 ATP + 16 H2O = H2 + 8 oxidized [2Fe-2S]-[ferredoxin] + 2 NH4(+) + 16 ADP + 16 phosphate + 6 H(+)</text>
        <dbReference type="Rhea" id="RHEA:21448"/>
        <dbReference type="Rhea" id="RHEA-COMP:10000"/>
        <dbReference type="Rhea" id="RHEA-COMP:10001"/>
        <dbReference type="ChEBI" id="CHEBI:15377"/>
        <dbReference type="ChEBI" id="CHEBI:15378"/>
        <dbReference type="ChEBI" id="CHEBI:17997"/>
        <dbReference type="ChEBI" id="CHEBI:18276"/>
        <dbReference type="ChEBI" id="CHEBI:28938"/>
        <dbReference type="ChEBI" id="CHEBI:30616"/>
        <dbReference type="ChEBI" id="CHEBI:33737"/>
        <dbReference type="ChEBI" id="CHEBI:33738"/>
        <dbReference type="ChEBI" id="CHEBI:43474"/>
        <dbReference type="ChEBI" id="CHEBI:456216"/>
        <dbReference type="EC" id="1.18.6.1"/>
    </reaction>
</comment>
<comment type="cofactor">
    <cofactor evidence="1">
        <name>[4Fe-4S] cluster</name>
        <dbReference type="ChEBI" id="CHEBI:49883"/>
    </cofactor>
    <text evidence="1">Binds 1 [4Fe-4S] cluster per dimer.</text>
</comment>
<comment type="subunit">
    <text evidence="1">Homodimer.</text>
</comment>
<comment type="PTM">
    <text evidence="1">The reversible ADP-ribosylation of Arg-99 inactivates the nitrogenase reductase and regulates nitrogenase activity.</text>
</comment>
<comment type="similarity">
    <text evidence="1">Belongs to the NifH/BchL/ChlL family.</text>
</comment>
<protein>
    <recommendedName>
        <fullName evidence="1">Nitrogenase iron protein</fullName>
        <ecNumber evidence="1">1.18.6.1</ecNumber>
    </recommendedName>
    <alternativeName>
        <fullName evidence="1">Nitrogenase Fe protein</fullName>
    </alternativeName>
    <alternativeName>
        <fullName evidence="1">Nitrogenase component II</fullName>
    </alternativeName>
    <alternativeName>
        <fullName evidence="1">Nitrogenase reductase</fullName>
    </alternativeName>
</protein>
<gene>
    <name evidence="1" type="primary">nifH</name>
    <name type="ordered locus">Franean1_6881</name>
</gene>
<organism>
    <name type="scientific">Parafrankia sp. (strain EAN1pec)</name>
    <dbReference type="NCBI Taxonomy" id="298653"/>
    <lineage>
        <taxon>Bacteria</taxon>
        <taxon>Bacillati</taxon>
        <taxon>Actinomycetota</taxon>
        <taxon>Actinomycetes</taxon>
        <taxon>Frankiales</taxon>
        <taxon>Frankiaceae</taxon>
        <taxon>Parafrankia</taxon>
    </lineage>
</organism>
<evidence type="ECO:0000255" key="1">
    <source>
        <dbReference type="HAMAP-Rule" id="MF_00533"/>
    </source>
</evidence>
<name>NIFH_PARS2</name>
<sequence length="289" mass="31725">MRQIAFYGKGGIGKSTTQQNTMAAMAEMGRRVMIVGCDPKADSTRLILHSKAQTSVIQLAAEKGSVEDLELDEVLVEGQWGIKCVESGGPEPGVGCAGRGVITSITYLEEAGAYENLDFVTYDVLGDVVCGGFAMPIRQGKAQEIYIVTSGEMMAMYAANNIARGVLKYAHSGGVRLGGLICNSRNTDREDELIIELARRLNTQMIHFIPRNNVVQHAELRRMTVIEYDPENSQANEYRQLAKKIDENDMKTIPTPISMDELEELLIEFGIMEQEDESIIGQKANATVA</sequence>